<dbReference type="EMBL" id="CP000251">
    <property type="protein sequence ID" value="ABC81123.1"/>
    <property type="molecule type" value="Genomic_DNA"/>
</dbReference>
<dbReference type="RefSeq" id="WP_011420406.1">
    <property type="nucleotide sequence ID" value="NC_007760.1"/>
</dbReference>
<dbReference type="SMR" id="Q2IQP0"/>
<dbReference type="STRING" id="290397.Adeh_1349"/>
<dbReference type="KEGG" id="ade:Adeh_1349"/>
<dbReference type="eggNOG" id="COG2063">
    <property type="taxonomic scope" value="Bacteria"/>
</dbReference>
<dbReference type="HOGENOM" id="CLU_069313_1_1_7"/>
<dbReference type="OrthoDB" id="9789227at2"/>
<dbReference type="Proteomes" id="UP000001935">
    <property type="component" value="Chromosome"/>
</dbReference>
<dbReference type="GO" id="GO:0009427">
    <property type="term" value="C:bacterial-type flagellum basal body, distal rod, L ring"/>
    <property type="evidence" value="ECO:0007669"/>
    <property type="project" value="InterPro"/>
</dbReference>
<dbReference type="GO" id="GO:0009279">
    <property type="term" value="C:cell outer membrane"/>
    <property type="evidence" value="ECO:0007669"/>
    <property type="project" value="UniProtKB-SubCell"/>
</dbReference>
<dbReference type="GO" id="GO:0003774">
    <property type="term" value="F:cytoskeletal motor activity"/>
    <property type="evidence" value="ECO:0007669"/>
    <property type="project" value="InterPro"/>
</dbReference>
<dbReference type="GO" id="GO:0071973">
    <property type="term" value="P:bacterial-type flagellum-dependent cell motility"/>
    <property type="evidence" value="ECO:0007669"/>
    <property type="project" value="InterPro"/>
</dbReference>
<dbReference type="HAMAP" id="MF_00415">
    <property type="entry name" value="FlgH"/>
    <property type="match status" value="1"/>
</dbReference>
<dbReference type="InterPro" id="IPR000527">
    <property type="entry name" value="Flag_Lring"/>
</dbReference>
<dbReference type="PANTHER" id="PTHR34933">
    <property type="entry name" value="FLAGELLAR L-RING PROTEIN"/>
    <property type="match status" value="1"/>
</dbReference>
<dbReference type="PANTHER" id="PTHR34933:SF1">
    <property type="entry name" value="FLAGELLAR L-RING PROTEIN"/>
    <property type="match status" value="1"/>
</dbReference>
<dbReference type="Pfam" id="PF02107">
    <property type="entry name" value="FlgH"/>
    <property type="match status" value="1"/>
</dbReference>
<dbReference type="PRINTS" id="PR01008">
    <property type="entry name" value="FLGLRINGFLGH"/>
</dbReference>
<dbReference type="PROSITE" id="PS51257">
    <property type="entry name" value="PROKAR_LIPOPROTEIN"/>
    <property type="match status" value="1"/>
</dbReference>
<name>FLGH_ANADE</name>
<accession>Q2IQP0</accession>
<organism>
    <name type="scientific">Anaeromyxobacter dehalogenans (strain 2CP-C)</name>
    <dbReference type="NCBI Taxonomy" id="290397"/>
    <lineage>
        <taxon>Bacteria</taxon>
        <taxon>Pseudomonadati</taxon>
        <taxon>Myxococcota</taxon>
        <taxon>Myxococcia</taxon>
        <taxon>Myxococcales</taxon>
        <taxon>Cystobacterineae</taxon>
        <taxon>Anaeromyxobacteraceae</taxon>
        <taxon>Anaeromyxobacter</taxon>
    </lineage>
</organism>
<keyword id="KW-0975">Bacterial flagellum</keyword>
<keyword id="KW-0998">Cell outer membrane</keyword>
<keyword id="KW-0449">Lipoprotein</keyword>
<keyword id="KW-0472">Membrane</keyword>
<keyword id="KW-0564">Palmitate</keyword>
<keyword id="KW-1185">Reference proteome</keyword>
<keyword id="KW-0732">Signal</keyword>
<sequence length="229" mass="24659">MSPLTRIALALAASAALVLALTACGPAHVAGYVPKRRDYAVPDASGQDTQAASAGSTWREGRAASMLYTDARALRENDLVVVRIEEIADAKRSADTDLTRRSELNASIEAFLTSLSTPYALKGGADSGFKGLGSTARTERLTATVPAVVRKVLPNGNLFIEGHRVVLVNAEEQHFYISGVVRPIDIDQENGVKSSMVADAEIEFTGRGVLSDNQRQGWLSRLLGWFWPF</sequence>
<feature type="signal peptide" evidence="1">
    <location>
        <begin position="1"/>
        <end position="23"/>
    </location>
</feature>
<feature type="chain" id="PRO_0000236814" description="Flagellar L-ring protein">
    <location>
        <begin position="24"/>
        <end position="229"/>
    </location>
</feature>
<feature type="lipid moiety-binding region" description="N-palmitoyl cysteine" evidence="1">
    <location>
        <position position="24"/>
    </location>
</feature>
<feature type="lipid moiety-binding region" description="S-diacylglycerol cysteine" evidence="1">
    <location>
        <position position="24"/>
    </location>
</feature>
<reference key="1">
    <citation type="submission" date="2006-01" db="EMBL/GenBank/DDBJ databases">
        <title>Complete sequence of Anaeromyxobacter dehalogenans 2CP-C.</title>
        <authorList>
            <person name="Copeland A."/>
            <person name="Lucas S."/>
            <person name="Lapidus A."/>
            <person name="Barry K."/>
            <person name="Detter J.C."/>
            <person name="Glavina T."/>
            <person name="Hammon N."/>
            <person name="Israni S."/>
            <person name="Pitluck S."/>
            <person name="Brettin T."/>
            <person name="Bruce D."/>
            <person name="Han C."/>
            <person name="Tapia R."/>
            <person name="Gilna P."/>
            <person name="Kiss H."/>
            <person name="Schmutz J."/>
            <person name="Larimer F."/>
            <person name="Land M."/>
            <person name="Kyrpides N."/>
            <person name="Anderson I."/>
            <person name="Sanford R.A."/>
            <person name="Ritalahti K.M."/>
            <person name="Thomas H.S."/>
            <person name="Kirby J.R."/>
            <person name="Zhulin I.B."/>
            <person name="Loeffler F.E."/>
            <person name="Richardson P."/>
        </authorList>
    </citation>
    <scope>NUCLEOTIDE SEQUENCE [LARGE SCALE GENOMIC DNA]</scope>
    <source>
        <strain>2CP-C</strain>
    </source>
</reference>
<evidence type="ECO:0000255" key="1">
    <source>
        <dbReference type="HAMAP-Rule" id="MF_00415"/>
    </source>
</evidence>
<gene>
    <name evidence="1" type="primary">flgH</name>
    <name type="ordered locus">Adeh_1349</name>
</gene>
<comment type="function">
    <text evidence="1">Assembles around the rod to form the L-ring and probably protects the motor/basal body from shearing forces during rotation.</text>
</comment>
<comment type="subunit">
    <text evidence="1">The basal body constitutes a major portion of the flagellar organelle and consists of four rings (L,P,S, and M) mounted on a central rod.</text>
</comment>
<comment type="subcellular location">
    <subcellularLocation>
        <location evidence="1">Cell outer membrane</location>
        <topology evidence="1">Lipid-anchor</topology>
    </subcellularLocation>
    <subcellularLocation>
        <location evidence="1">Bacterial flagellum basal body</location>
    </subcellularLocation>
</comment>
<comment type="similarity">
    <text evidence="1">Belongs to the FlgH family.</text>
</comment>
<protein>
    <recommendedName>
        <fullName evidence="1">Flagellar L-ring protein</fullName>
    </recommendedName>
    <alternativeName>
        <fullName evidence="1">Basal body L-ring protein</fullName>
    </alternativeName>
</protein>
<proteinExistence type="inferred from homology"/>